<protein>
    <recommendedName>
        <fullName evidence="3">T-complex protein 1 subunit delta</fullName>
        <shortName evidence="3">TCP-1-delta</shortName>
    </recommendedName>
    <alternativeName>
        <fullName evidence="3">CCT-delta</fullName>
    </alternativeName>
    <alternativeName>
        <fullName evidence="4">Chaperonin CCT4</fullName>
    </alternativeName>
</protein>
<evidence type="ECO:0000255" key="1">
    <source>
        <dbReference type="RuleBase" id="RU004187"/>
    </source>
</evidence>
<evidence type="ECO:0000256" key="2">
    <source>
        <dbReference type="SAM" id="MobiDB-lite"/>
    </source>
</evidence>
<evidence type="ECO:0000303" key="3">
    <source>
    </source>
</evidence>
<evidence type="ECO:0000305" key="4"/>
<evidence type="ECO:0000305" key="5">
    <source>
    </source>
</evidence>
<evidence type="ECO:0000312" key="6">
    <source>
        <dbReference type="Araport" id="AT3G18190"/>
    </source>
</evidence>
<evidence type="ECO:0000312" key="7">
    <source>
        <dbReference type="Proteomes" id="UP000006548"/>
    </source>
</evidence>
<name>TCPD_ARATH</name>
<comment type="function">
    <text evidence="4">Molecular chaperone; assists the folding of proteins upon ATP hydrolysis. Known to play a role, in vitro, in the folding of actin and tubulin.</text>
</comment>
<comment type="subunit">
    <text evidence="5">Heterooligomeric complex of about 850 to 900 kDa that forms two stacked rings, 12 to 16 nm in diameter.</text>
</comment>
<comment type="subcellular location">
    <subcellularLocation>
        <location evidence="4">Cytoplasm</location>
    </subcellularLocation>
</comment>
<comment type="similarity">
    <text evidence="1">Belongs to the TCP-1 chaperonin family.</text>
</comment>
<reference key="1">
    <citation type="journal article" date="2000" name="DNA Res.">
        <title>Structural analysis of Arabidopsis thaliana chromosome 3. II. Sequence features of the 4,251,695 bp regions covered by 90 P1, TAC and BAC clones.</title>
        <authorList>
            <person name="Kaneko T."/>
            <person name="Katoh T."/>
            <person name="Sato S."/>
            <person name="Nakamura Y."/>
            <person name="Asamizu E."/>
            <person name="Tabata S."/>
        </authorList>
    </citation>
    <scope>NUCLEOTIDE SEQUENCE [LARGE SCALE GENOMIC DNA]</scope>
    <source>
        <strain>cv. Columbia</strain>
    </source>
</reference>
<reference key="2">
    <citation type="journal article" date="2017" name="Plant J.">
        <title>Araport11: a complete reannotation of the Arabidopsis thaliana reference genome.</title>
        <authorList>
            <person name="Cheng C.Y."/>
            <person name="Krishnakumar V."/>
            <person name="Chan A.P."/>
            <person name="Thibaud-Nissen F."/>
            <person name="Schobel S."/>
            <person name="Town C.D."/>
        </authorList>
    </citation>
    <scope>GENOME REANNOTATION</scope>
    <source>
        <strain>cv. Columbia</strain>
    </source>
</reference>
<reference key="3">
    <citation type="journal article" date="2003" name="Science">
        <title>Empirical analysis of transcriptional activity in the Arabidopsis genome.</title>
        <authorList>
            <person name="Yamada K."/>
            <person name="Lim J."/>
            <person name="Dale J.M."/>
            <person name="Chen H."/>
            <person name="Shinn P."/>
            <person name="Palm C.J."/>
            <person name="Southwick A.M."/>
            <person name="Wu H.C."/>
            <person name="Kim C.J."/>
            <person name="Nguyen M."/>
            <person name="Pham P.K."/>
            <person name="Cheuk R.F."/>
            <person name="Karlin-Newmann G."/>
            <person name="Liu S.X."/>
            <person name="Lam B."/>
            <person name="Sakano H."/>
            <person name="Wu T."/>
            <person name="Yu G."/>
            <person name="Miranda M."/>
            <person name="Quach H.L."/>
            <person name="Tripp M."/>
            <person name="Chang C.H."/>
            <person name="Lee J.M."/>
            <person name="Toriumi M.J."/>
            <person name="Chan M.M."/>
            <person name="Tang C.C."/>
            <person name="Onodera C.S."/>
            <person name="Deng J.M."/>
            <person name="Akiyama K."/>
            <person name="Ansari Y."/>
            <person name="Arakawa T."/>
            <person name="Banh J."/>
            <person name="Banno F."/>
            <person name="Bowser L."/>
            <person name="Brooks S.Y."/>
            <person name="Carninci P."/>
            <person name="Chao Q."/>
            <person name="Choy N."/>
            <person name="Enju A."/>
            <person name="Goldsmith A.D."/>
            <person name="Gurjal M."/>
            <person name="Hansen N.F."/>
            <person name="Hayashizaki Y."/>
            <person name="Johnson-Hopson C."/>
            <person name="Hsuan V.W."/>
            <person name="Iida K."/>
            <person name="Karnes M."/>
            <person name="Khan S."/>
            <person name="Koesema E."/>
            <person name="Ishida J."/>
            <person name="Jiang P.X."/>
            <person name="Jones T."/>
            <person name="Kawai J."/>
            <person name="Kamiya A."/>
            <person name="Meyers C."/>
            <person name="Nakajima M."/>
            <person name="Narusaka M."/>
            <person name="Seki M."/>
            <person name="Sakurai T."/>
            <person name="Satou M."/>
            <person name="Tamse R."/>
            <person name="Vaysberg M."/>
            <person name="Wallender E.K."/>
            <person name="Wong C."/>
            <person name="Yamamura Y."/>
            <person name="Yuan S."/>
            <person name="Shinozaki K."/>
            <person name="Davis R.W."/>
            <person name="Theologis A."/>
            <person name="Ecker J.R."/>
        </authorList>
    </citation>
    <scope>NUCLEOTIDE SEQUENCE [LARGE SCALE MRNA]</scope>
    <source>
        <strain>cv. Columbia</strain>
    </source>
</reference>
<reference key="4">
    <citation type="submission" date="2002-03" db="EMBL/GenBank/DDBJ databases">
        <title>Full-length cDNA from Arabidopsis thaliana.</title>
        <authorList>
            <person name="Brover V.V."/>
            <person name="Troukhan M.E."/>
            <person name="Alexandrov N.A."/>
            <person name="Lu Y.-P."/>
            <person name="Flavell R.B."/>
            <person name="Feldmann K.A."/>
        </authorList>
    </citation>
    <scope>NUCLEOTIDE SEQUENCE [LARGE SCALE MRNA]</scope>
</reference>
<reference key="5">
    <citation type="journal article" date="2001" name="Cell Stress Chaperones">
        <title>Arabidopsis thaliana type I and II chaperonins.</title>
        <authorList>
            <person name="Hill J.E."/>
            <person name="Hemmingsen S.M."/>
        </authorList>
    </citation>
    <scope>GENE FAMILY</scope>
    <scope>NOMENCLATURE</scope>
    <scope>SUBUNIT</scope>
</reference>
<keyword id="KW-0067">ATP-binding</keyword>
<keyword id="KW-0143">Chaperone</keyword>
<keyword id="KW-0963">Cytoplasm</keyword>
<keyword id="KW-0547">Nucleotide-binding</keyword>
<keyword id="KW-1185">Reference proteome</keyword>
<sequence>MAAVAAPMASKPRGSKAESFVDNKRREDIRFANINSARAVSDAVRTSLGPKGMDKMISTANGEVIITNDGATILNKMEVLQPAAKMLVELSKSQDSAAGDGTTTVVVIAGALLKECQSLLTNGIHPTVISDSLHKACGKAIDILTAMAVPVELTDRDSLVKSASTSLNSKVVSQYSTLLAPLAVDAVLSVIDPEKPEIVDLRDIKIVKKLGGTVDDTHTVKGLVFDKKVSRAAGGPTRVENAKIAVIQFQISPPKTDIEQSIVVSDYTQMDRILKEERNYILGMIKKIKATGCNVLLIQKSILRDAVTDLSLHYLAKAKIMVIKDVERDEIEFVTKTLNCLPIANIEHFRAEKLGHADLVEEASLGDGKILKITGIKDMGRTTSVLVRGSNQLVLDEAERSLHDALCVVRCLVSKRFLIAGGGAPEIELSRQLGAWAKVLHGMEGYCVKSFAEALEVIPYTLAENAGLNPIAIVTELRNKHAQGEINAGINVRKGQITNILEENVVQPLLVSTSAITLATECVRMILKIDDIVTVR</sequence>
<dbReference type="EMBL" id="AB020749">
    <property type="protein sequence ID" value="BAB02032.1"/>
    <property type="molecule type" value="Genomic_DNA"/>
</dbReference>
<dbReference type="EMBL" id="CP002686">
    <property type="protein sequence ID" value="AEE76061.1"/>
    <property type="molecule type" value="Genomic_DNA"/>
</dbReference>
<dbReference type="EMBL" id="AY099877">
    <property type="protein sequence ID" value="AAM20728.1"/>
    <property type="molecule type" value="mRNA"/>
</dbReference>
<dbReference type="EMBL" id="BT003418">
    <property type="protein sequence ID" value="AAO30081.1"/>
    <property type="molecule type" value="mRNA"/>
</dbReference>
<dbReference type="EMBL" id="AY088570">
    <property type="protein sequence ID" value="AAM66101.1"/>
    <property type="molecule type" value="mRNA"/>
</dbReference>
<dbReference type="RefSeq" id="NP_188447.1">
    <property type="nucleotide sequence ID" value="NM_112702.3"/>
</dbReference>
<dbReference type="SMR" id="Q9LV21"/>
<dbReference type="FunCoup" id="Q9LV21">
    <property type="interactions" value="4998"/>
</dbReference>
<dbReference type="IntAct" id="Q9LV21">
    <property type="interactions" value="4"/>
</dbReference>
<dbReference type="STRING" id="3702.Q9LV21"/>
<dbReference type="iPTMnet" id="Q9LV21"/>
<dbReference type="MetOSite" id="Q9LV21"/>
<dbReference type="PaxDb" id="3702-AT3G18190.1"/>
<dbReference type="ProteomicsDB" id="234201"/>
<dbReference type="EnsemblPlants" id="AT3G18190.1">
    <property type="protein sequence ID" value="AT3G18190.1"/>
    <property type="gene ID" value="AT3G18190"/>
</dbReference>
<dbReference type="GeneID" id="821346"/>
<dbReference type="Gramene" id="AT3G18190.1">
    <property type="protein sequence ID" value="AT3G18190.1"/>
    <property type="gene ID" value="AT3G18190"/>
</dbReference>
<dbReference type="KEGG" id="ath:AT3G18190"/>
<dbReference type="Araport" id="AT3G18190"/>
<dbReference type="TAIR" id="AT3G18190"/>
<dbReference type="eggNOG" id="KOG0358">
    <property type="taxonomic scope" value="Eukaryota"/>
</dbReference>
<dbReference type="HOGENOM" id="CLU_008891_9_1_1"/>
<dbReference type="InParanoid" id="Q9LV21"/>
<dbReference type="OMA" id="HPAANMI"/>
<dbReference type="PhylomeDB" id="Q9LV21"/>
<dbReference type="BRENDA" id="3.6.4.B10">
    <property type="organism ID" value="399"/>
</dbReference>
<dbReference type="CD-CODE" id="4299E36E">
    <property type="entry name" value="Nucleolus"/>
</dbReference>
<dbReference type="PRO" id="PR:Q9LV21"/>
<dbReference type="Proteomes" id="UP000006548">
    <property type="component" value="Chromosome 3"/>
</dbReference>
<dbReference type="ExpressionAtlas" id="Q9LV21">
    <property type="expression patterns" value="baseline and differential"/>
</dbReference>
<dbReference type="GO" id="GO:0005829">
    <property type="term" value="C:cytosol"/>
    <property type="evidence" value="ECO:0007005"/>
    <property type="project" value="TAIR"/>
</dbReference>
<dbReference type="GO" id="GO:0005524">
    <property type="term" value="F:ATP binding"/>
    <property type="evidence" value="ECO:0007669"/>
    <property type="project" value="UniProtKB-KW"/>
</dbReference>
<dbReference type="GO" id="GO:0016887">
    <property type="term" value="F:ATP hydrolysis activity"/>
    <property type="evidence" value="ECO:0007669"/>
    <property type="project" value="InterPro"/>
</dbReference>
<dbReference type="GO" id="GO:0140662">
    <property type="term" value="F:ATP-dependent protein folding chaperone"/>
    <property type="evidence" value="ECO:0007669"/>
    <property type="project" value="InterPro"/>
</dbReference>
<dbReference type="GO" id="GO:0051082">
    <property type="term" value="F:unfolded protein binding"/>
    <property type="evidence" value="ECO:0007669"/>
    <property type="project" value="InterPro"/>
</dbReference>
<dbReference type="CDD" id="cd03338">
    <property type="entry name" value="TCP1_delta"/>
    <property type="match status" value="1"/>
</dbReference>
<dbReference type="FunFam" id="3.50.7.10:FF:000010">
    <property type="entry name" value="T-complex protein 1 subunit delta"/>
    <property type="match status" value="1"/>
</dbReference>
<dbReference type="Gene3D" id="3.50.7.10">
    <property type="entry name" value="GroEL"/>
    <property type="match status" value="1"/>
</dbReference>
<dbReference type="Gene3D" id="1.10.560.10">
    <property type="entry name" value="GroEL-like equatorial domain"/>
    <property type="match status" value="1"/>
</dbReference>
<dbReference type="Gene3D" id="3.30.260.10">
    <property type="entry name" value="TCP-1-like chaperonin intermediate domain"/>
    <property type="match status" value="1"/>
</dbReference>
<dbReference type="InterPro" id="IPR012717">
    <property type="entry name" value="Chap_CCT_delta"/>
</dbReference>
<dbReference type="InterPro" id="IPR017998">
    <property type="entry name" value="Chaperone_TCP-1"/>
</dbReference>
<dbReference type="InterPro" id="IPR002194">
    <property type="entry name" value="Chaperonin_TCP-1_CS"/>
</dbReference>
<dbReference type="InterPro" id="IPR002423">
    <property type="entry name" value="Cpn60/GroEL/TCP-1"/>
</dbReference>
<dbReference type="InterPro" id="IPR027409">
    <property type="entry name" value="GroEL-like_apical_dom_sf"/>
</dbReference>
<dbReference type="InterPro" id="IPR027413">
    <property type="entry name" value="GROEL-like_equatorial_sf"/>
</dbReference>
<dbReference type="InterPro" id="IPR027410">
    <property type="entry name" value="TCP-1-like_intermed_sf"/>
</dbReference>
<dbReference type="InterPro" id="IPR053374">
    <property type="entry name" value="TCP-1_chaperonin"/>
</dbReference>
<dbReference type="InterPro" id="IPR054827">
    <property type="entry name" value="thermosome_alpha"/>
</dbReference>
<dbReference type="NCBIfam" id="TIGR02342">
    <property type="entry name" value="chap_CCT_delta"/>
    <property type="match status" value="1"/>
</dbReference>
<dbReference type="NCBIfam" id="NF041082">
    <property type="entry name" value="thermosome_alpha"/>
    <property type="match status" value="1"/>
</dbReference>
<dbReference type="NCBIfam" id="NF041083">
    <property type="entry name" value="thermosome_beta"/>
    <property type="match status" value="1"/>
</dbReference>
<dbReference type="PANTHER" id="PTHR11353">
    <property type="entry name" value="CHAPERONIN"/>
    <property type="match status" value="1"/>
</dbReference>
<dbReference type="Pfam" id="PF00118">
    <property type="entry name" value="Cpn60_TCP1"/>
    <property type="match status" value="1"/>
</dbReference>
<dbReference type="PRINTS" id="PR00304">
    <property type="entry name" value="TCOMPLEXTCP1"/>
</dbReference>
<dbReference type="SUPFAM" id="SSF52029">
    <property type="entry name" value="GroEL apical domain-like"/>
    <property type="match status" value="1"/>
</dbReference>
<dbReference type="SUPFAM" id="SSF48592">
    <property type="entry name" value="GroEL equatorial domain-like"/>
    <property type="match status" value="1"/>
</dbReference>
<dbReference type="SUPFAM" id="SSF54849">
    <property type="entry name" value="GroEL-intermediate domain like"/>
    <property type="match status" value="1"/>
</dbReference>
<dbReference type="PROSITE" id="PS00750">
    <property type="entry name" value="TCP1_1"/>
    <property type="match status" value="1"/>
</dbReference>
<dbReference type="PROSITE" id="PS00995">
    <property type="entry name" value="TCP1_3"/>
    <property type="match status" value="1"/>
</dbReference>
<accession>Q9LV21</accession>
<accession>Q8L994</accession>
<gene>
    <name evidence="4" type="primary">CCT4</name>
    <name evidence="6" type="ordered locus">At3g18190</name>
    <name type="ORF">MRC8</name>
</gene>
<organism evidence="7">
    <name type="scientific">Arabidopsis thaliana</name>
    <name type="common">Mouse-ear cress</name>
    <dbReference type="NCBI Taxonomy" id="3702"/>
    <lineage>
        <taxon>Eukaryota</taxon>
        <taxon>Viridiplantae</taxon>
        <taxon>Streptophyta</taxon>
        <taxon>Embryophyta</taxon>
        <taxon>Tracheophyta</taxon>
        <taxon>Spermatophyta</taxon>
        <taxon>Magnoliopsida</taxon>
        <taxon>eudicotyledons</taxon>
        <taxon>Gunneridae</taxon>
        <taxon>Pentapetalae</taxon>
        <taxon>rosids</taxon>
        <taxon>malvids</taxon>
        <taxon>Brassicales</taxon>
        <taxon>Brassicaceae</taxon>
        <taxon>Camelineae</taxon>
        <taxon>Arabidopsis</taxon>
    </lineage>
</organism>
<proteinExistence type="evidence at protein level"/>
<feature type="chain" id="PRO_0000431661" description="T-complex protein 1 subunit delta">
    <location>
        <begin position="1"/>
        <end position="536"/>
    </location>
</feature>
<feature type="region of interest" description="Disordered" evidence="2">
    <location>
        <begin position="1"/>
        <end position="21"/>
    </location>
</feature>
<feature type="sequence conflict" description="In Ref. 4; AAM66101." evidence="4" ref="4">
    <original>M</original>
    <variation>I</variation>
    <location>
        <position position="8"/>
    </location>
</feature>